<comment type="function">
    <text evidence="4">Transcription factor that regulates the expression of the gene cluster that mediates the biosynthesis of the tetramic acids Sch210971 and Sch210972, potential anti-HIV fungal natural product that contain a decalin core.</text>
</comment>
<comment type="subcellular location">
    <subcellularLocation>
        <location evidence="1">Nucleus</location>
    </subcellularLocation>
</comment>
<feature type="chain" id="PRO_0000453351" description="Transcription factor tasR">
    <location>
        <begin position="1"/>
        <end position="566"/>
    </location>
</feature>
<feature type="DNA-binding region" description="Zn(2)-C6 fungal-type" evidence="1">
    <location>
        <begin position="35"/>
        <end position="68"/>
    </location>
</feature>
<feature type="region of interest" description="Disordered" evidence="2">
    <location>
        <begin position="1"/>
        <end position="31"/>
    </location>
</feature>
<feature type="region of interest" description="Disordered" evidence="2">
    <location>
        <begin position="72"/>
        <end position="174"/>
    </location>
</feature>
<feature type="region of interest" description="Disordered" evidence="2">
    <location>
        <begin position="346"/>
        <end position="382"/>
    </location>
</feature>
<feature type="region of interest" description="Disordered" evidence="2">
    <location>
        <begin position="422"/>
        <end position="453"/>
    </location>
</feature>
<feature type="region of interest" description="Disordered" evidence="2">
    <location>
        <begin position="500"/>
        <end position="551"/>
    </location>
</feature>
<feature type="compositionally biased region" description="Low complexity" evidence="2">
    <location>
        <begin position="1"/>
        <end position="30"/>
    </location>
</feature>
<feature type="compositionally biased region" description="Low complexity" evidence="2">
    <location>
        <begin position="89"/>
        <end position="108"/>
    </location>
</feature>
<feature type="compositionally biased region" description="Low complexity" evidence="2">
    <location>
        <begin position="359"/>
        <end position="378"/>
    </location>
</feature>
<feature type="compositionally biased region" description="Gly residues" evidence="2">
    <location>
        <begin position="501"/>
        <end position="532"/>
    </location>
</feature>
<protein>
    <recommendedName>
        <fullName evidence="3">Transcription factor tasR</fullName>
    </recommendedName>
    <alternativeName>
        <fullName evidence="3">Tetramic acid Sch210971/2 biosynthesis cluster protein R</fullName>
    </alternativeName>
</protein>
<gene>
    <name evidence="3" type="primary">tasR</name>
</gene>
<keyword id="KW-0238">DNA-binding</keyword>
<keyword id="KW-0479">Metal-binding</keyword>
<keyword id="KW-0539">Nucleus</keyword>
<keyword id="KW-0804">Transcription</keyword>
<keyword id="KW-0805">Transcription regulation</keyword>
<keyword id="KW-0862">Zinc</keyword>
<accession>A0A0F7GH49</accession>
<evidence type="ECO:0000255" key="1">
    <source>
        <dbReference type="PROSITE-ProRule" id="PRU00227"/>
    </source>
</evidence>
<evidence type="ECO:0000256" key="2">
    <source>
        <dbReference type="SAM" id="MobiDB-lite"/>
    </source>
</evidence>
<evidence type="ECO:0000303" key="3">
    <source>
    </source>
</evidence>
<evidence type="ECO:0000305" key="4">
    <source>
    </source>
</evidence>
<reference key="1">
    <citation type="journal article" date="2015" name="Org. Lett.">
        <title>Biosynthesis of the tetramic acids Sch210971 and Sch210972.</title>
        <authorList>
            <person name="Kakule T.B."/>
            <person name="Zhang S."/>
            <person name="Zhan J."/>
            <person name="Schmidt E.W."/>
        </authorList>
    </citation>
    <scope>NUCLEOTIDE SEQUENCE [GENOMIC DNA]</scope>
    <scope>FUNCTION</scope>
    <scope>CATALYTIC ACTIVITY</scope>
    <scope>PATHWAY</scope>
</reference>
<organism>
    <name type="scientific">Hapsidospora irregularis</name>
    <dbReference type="NCBI Taxonomy" id="95324"/>
    <lineage>
        <taxon>Eukaryota</taxon>
        <taxon>Fungi</taxon>
        <taxon>Dikarya</taxon>
        <taxon>Ascomycota</taxon>
        <taxon>Pezizomycotina</taxon>
        <taxon>Sordariomycetes</taxon>
        <taxon>Hypocreomycetidae</taxon>
        <taxon>Hypocreales</taxon>
        <taxon>Bionectriaceae</taxon>
        <taxon>Hapsidospora</taxon>
    </lineage>
</organism>
<name>TASR_HAPIR</name>
<dbReference type="EMBL" id="KP835202">
    <property type="protein sequence ID" value="AKG54859.1"/>
    <property type="molecule type" value="Genomic_DNA"/>
</dbReference>
<dbReference type="SMR" id="A0A0F7GH49"/>
<dbReference type="GO" id="GO:0005634">
    <property type="term" value="C:nucleus"/>
    <property type="evidence" value="ECO:0007669"/>
    <property type="project" value="UniProtKB-SubCell"/>
</dbReference>
<dbReference type="GO" id="GO:0003677">
    <property type="term" value="F:DNA binding"/>
    <property type="evidence" value="ECO:0007669"/>
    <property type="project" value="UniProtKB-KW"/>
</dbReference>
<dbReference type="GO" id="GO:0000981">
    <property type="term" value="F:DNA-binding transcription factor activity, RNA polymerase II-specific"/>
    <property type="evidence" value="ECO:0007669"/>
    <property type="project" value="InterPro"/>
</dbReference>
<dbReference type="GO" id="GO:0008270">
    <property type="term" value="F:zinc ion binding"/>
    <property type="evidence" value="ECO:0007669"/>
    <property type="project" value="InterPro"/>
</dbReference>
<dbReference type="CDD" id="cd00067">
    <property type="entry name" value="GAL4"/>
    <property type="match status" value="1"/>
</dbReference>
<dbReference type="Gene3D" id="4.10.240.10">
    <property type="entry name" value="Zn(2)-C6 fungal-type DNA-binding domain"/>
    <property type="match status" value="1"/>
</dbReference>
<dbReference type="InterPro" id="IPR036864">
    <property type="entry name" value="Zn2-C6_fun-type_DNA-bd_sf"/>
</dbReference>
<dbReference type="InterPro" id="IPR001138">
    <property type="entry name" value="Zn2Cys6_DnaBD"/>
</dbReference>
<dbReference type="Pfam" id="PF00172">
    <property type="entry name" value="Zn_clus"/>
    <property type="match status" value="1"/>
</dbReference>
<dbReference type="SMART" id="SM00066">
    <property type="entry name" value="GAL4"/>
    <property type="match status" value="1"/>
</dbReference>
<dbReference type="SUPFAM" id="SSF57701">
    <property type="entry name" value="Zn2/Cys6 DNA-binding domain"/>
    <property type="match status" value="1"/>
</dbReference>
<dbReference type="PROSITE" id="PS00463">
    <property type="entry name" value="ZN2_CY6_FUNGAL_1"/>
    <property type="match status" value="1"/>
</dbReference>
<dbReference type="PROSITE" id="PS50048">
    <property type="entry name" value="ZN2_CY6_FUNGAL_2"/>
    <property type="match status" value="1"/>
</dbReference>
<proteinExistence type="evidence at protein level"/>
<sequence length="566" mass="57025">MISASRMEESASSSSLSDAAAPPPGAALQSIRSSCDRCRFHKLKCNVPAAGHGGPVPCERCTRAKVPCVFGRRRRANRPSEDKKRPAAPTRRATMPSPSPTPASTSAAHGGGDSATTGSADPPPPPPSTMDAALQRTPASHSDTGPAATYDGRSWETLMTGGLGDSPDILPGQHNSAGNGWEWFHQGFGLDDTSMFDADTLDPAIIWSPPTPQHIPTAALALATTELDMTTAPPATSGGTANMMRSSNTNTNSNSNSSSCWAPVQQLLPLIADMQQRLKMLEQGPWQGGDFPQSLDDYPVGAVLHLSREFGSIAGQVLSRAIAAGMVTGGGVPPVVRNHATDGGREFIVTNNPQKHLGSESSSSSSSSISNSSSNNEAGGDDGGVDTATALLVLGGYMWLMRIYGAALGHFQVHLSGLSGASESDGCGRGASRSGPNASPALRLGELPSTGTAPDLGRIHTALGMLQGALAEVEGQLGRGGAVARNLVVALLTRQEAVSRGVGGGGGGGGGGGGGGGGGVGGGGGGGGGPGGSSEHSGGSSDVDDCEGLGGKVQSVKELLREKMGF</sequence>